<accession>Q754Q2</accession>
<dbReference type="EC" id="3.1.2.1"/>
<dbReference type="EMBL" id="AE016819">
    <property type="protein sequence ID" value="AAS53391.2"/>
    <property type="molecule type" value="Genomic_DNA"/>
</dbReference>
<dbReference type="RefSeq" id="NP_985567.2">
    <property type="nucleotide sequence ID" value="NM_210921.2"/>
</dbReference>
<dbReference type="SMR" id="Q754Q2"/>
<dbReference type="FunCoup" id="Q754Q2">
    <property type="interactions" value="229"/>
</dbReference>
<dbReference type="STRING" id="284811.Q754Q2"/>
<dbReference type="EnsemblFungi" id="AAS53391">
    <property type="protein sequence ID" value="AAS53391"/>
    <property type="gene ID" value="AGOS_AFR020W"/>
</dbReference>
<dbReference type="GeneID" id="4621806"/>
<dbReference type="KEGG" id="ago:AGOS_AFR020W"/>
<dbReference type="eggNOG" id="KOG2828">
    <property type="taxonomic scope" value="Eukaryota"/>
</dbReference>
<dbReference type="HOGENOM" id="CLU_019748_3_0_1"/>
<dbReference type="InParanoid" id="Q754Q2"/>
<dbReference type="OMA" id="SCIVPMV"/>
<dbReference type="OrthoDB" id="10250396at2759"/>
<dbReference type="Proteomes" id="UP000000591">
    <property type="component" value="Chromosome VI"/>
</dbReference>
<dbReference type="GO" id="GO:0005829">
    <property type="term" value="C:cytosol"/>
    <property type="evidence" value="ECO:0007669"/>
    <property type="project" value="EnsemblFungi"/>
</dbReference>
<dbReference type="GO" id="GO:0005739">
    <property type="term" value="C:mitochondrion"/>
    <property type="evidence" value="ECO:0000318"/>
    <property type="project" value="GO_Central"/>
</dbReference>
<dbReference type="GO" id="GO:0008775">
    <property type="term" value="F:acetate CoA-transferase activity"/>
    <property type="evidence" value="ECO:0000318"/>
    <property type="project" value="GO_Central"/>
</dbReference>
<dbReference type="GO" id="GO:0003986">
    <property type="term" value="F:acetyl-CoA hydrolase activity"/>
    <property type="evidence" value="ECO:0000318"/>
    <property type="project" value="GO_Central"/>
</dbReference>
<dbReference type="GO" id="GO:0006083">
    <property type="term" value="P:acetate metabolic process"/>
    <property type="evidence" value="ECO:0000318"/>
    <property type="project" value="GO_Central"/>
</dbReference>
<dbReference type="FunFam" id="3.30.750.70:FF:000002">
    <property type="entry name" value="Acetyl-CoA hydrolase Ach1"/>
    <property type="match status" value="1"/>
</dbReference>
<dbReference type="FunFam" id="3.40.1080.20:FF:000001">
    <property type="entry name" value="Acetyl-CoA hydrolase Ach1"/>
    <property type="match status" value="1"/>
</dbReference>
<dbReference type="FunFam" id="3.40.1080.10:FF:000003">
    <property type="entry name" value="Acetyl-coA hydrolase Ach1"/>
    <property type="match status" value="1"/>
</dbReference>
<dbReference type="Gene3D" id="3.30.750.70">
    <property type="entry name" value="4-hydroxybutyrate coenzyme like domains"/>
    <property type="match status" value="1"/>
</dbReference>
<dbReference type="Gene3D" id="3.40.1080.20">
    <property type="entry name" value="Acetyl-CoA hydrolase/transferase C-terminal domain"/>
    <property type="match status" value="1"/>
</dbReference>
<dbReference type="Gene3D" id="3.40.1080.10">
    <property type="entry name" value="Glutaconate Coenzyme A-transferase"/>
    <property type="match status" value="1"/>
</dbReference>
<dbReference type="InterPro" id="IPR026888">
    <property type="entry name" value="AcetylCoA_hyd_C"/>
</dbReference>
<dbReference type="InterPro" id="IPR038460">
    <property type="entry name" value="AcetylCoA_hyd_C_sf"/>
</dbReference>
<dbReference type="InterPro" id="IPR046433">
    <property type="entry name" value="ActCoA_hydro"/>
</dbReference>
<dbReference type="InterPro" id="IPR003702">
    <property type="entry name" value="ActCoA_hydro_N"/>
</dbReference>
<dbReference type="InterPro" id="IPR037171">
    <property type="entry name" value="NagB/RpiA_transferase-like"/>
</dbReference>
<dbReference type="PANTHER" id="PTHR43609">
    <property type="entry name" value="ACETYL-COA HYDROLASE"/>
    <property type="match status" value="1"/>
</dbReference>
<dbReference type="PANTHER" id="PTHR43609:SF1">
    <property type="entry name" value="ACETYL-COA HYDROLASE"/>
    <property type="match status" value="1"/>
</dbReference>
<dbReference type="Pfam" id="PF13336">
    <property type="entry name" value="AcetylCoA_hyd_C"/>
    <property type="match status" value="1"/>
</dbReference>
<dbReference type="Pfam" id="PF02550">
    <property type="entry name" value="AcetylCoA_hydro"/>
    <property type="match status" value="1"/>
</dbReference>
<dbReference type="SUPFAM" id="SSF100950">
    <property type="entry name" value="NagB/RpiA/CoA transferase-like"/>
    <property type="match status" value="2"/>
</dbReference>
<protein>
    <recommendedName>
        <fullName>Acetyl-CoA hydrolase</fullName>
        <ecNumber>3.1.2.1</ecNumber>
    </recommendedName>
    <alternativeName>
        <fullName>Acetyl-CoA deacylase</fullName>
        <shortName>Acetyl-CoA acylase</shortName>
    </alternativeName>
</protein>
<evidence type="ECO:0000250" key="1"/>
<evidence type="ECO:0000250" key="2">
    <source>
        <dbReference type="UniProtKB" id="B3EY95"/>
    </source>
</evidence>
<evidence type="ECO:0000305" key="3"/>
<reference key="1">
    <citation type="journal article" date="2004" name="Science">
        <title>The Ashbya gossypii genome as a tool for mapping the ancient Saccharomyces cerevisiae genome.</title>
        <authorList>
            <person name="Dietrich F.S."/>
            <person name="Voegeli S."/>
            <person name="Brachat S."/>
            <person name="Lerch A."/>
            <person name="Gates K."/>
            <person name="Steiner S."/>
            <person name="Mohr C."/>
            <person name="Poehlmann R."/>
            <person name="Luedi P."/>
            <person name="Choi S."/>
            <person name="Wing R.A."/>
            <person name="Flavier A."/>
            <person name="Gaffney T.D."/>
            <person name="Philippsen P."/>
        </authorList>
    </citation>
    <scope>NUCLEOTIDE SEQUENCE [LARGE SCALE GENOMIC DNA]</scope>
    <source>
        <strain>ATCC 10895 / CBS 109.51 / FGSC 9923 / NRRL Y-1056</strain>
    </source>
</reference>
<reference key="2">
    <citation type="journal article" date="2013" name="G3 (Bethesda)">
        <title>Genomes of Ashbya fungi isolated from insects reveal four mating-type loci, numerous translocations, lack of transposons, and distinct gene duplications.</title>
        <authorList>
            <person name="Dietrich F.S."/>
            <person name="Voegeli S."/>
            <person name="Kuo S."/>
            <person name="Philippsen P."/>
        </authorList>
    </citation>
    <scope>GENOME REANNOTATION</scope>
    <scope>SEQUENCE REVISION TO 437</scope>
    <source>
        <strain>ATCC 10895 / CBS 109.51 / FGSC 9923 / NRRL Y-1056</strain>
    </source>
</reference>
<organism>
    <name type="scientific">Eremothecium gossypii (strain ATCC 10895 / CBS 109.51 / FGSC 9923 / NRRL Y-1056)</name>
    <name type="common">Yeast</name>
    <name type="synonym">Ashbya gossypii</name>
    <dbReference type="NCBI Taxonomy" id="284811"/>
    <lineage>
        <taxon>Eukaryota</taxon>
        <taxon>Fungi</taxon>
        <taxon>Dikarya</taxon>
        <taxon>Ascomycota</taxon>
        <taxon>Saccharomycotina</taxon>
        <taxon>Saccharomycetes</taxon>
        <taxon>Saccharomycetales</taxon>
        <taxon>Saccharomycetaceae</taxon>
        <taxon>Eremothecium</taxon>
    </lineage>
</organism>
<sequence>MTVSQLLKQRVRYAPYLSKVRRAEELLPLFKHGQYIGWSGFTGVGAPKVIPTALADHVEKNGLQGQLAFNLFVGASAGPEENRWADLDMILRRAPHQVGKPIARAINDGRIKFFDKHLSMFPQDLTYGYYTRERTDGKILDYAIVEATAIKEDGSIVLGPSVGGSPEFMSAADKLIVEVNTATPSFEGLHDIDMPVLPPHRVPYPYTRVDERSGLDAVPVDPARVVALVESTERDKVGPNTPSDEGSRAIAGHLVEFFENEVRHGRLPANLLPLQSGIGNIANAVIEGLAGASFRNLTVWTEVLQDSFLDLFENGSLEFATATSIRLTEAGFEKFFANWDEYSSKLCLRSQVVSNSPEMIRRLGVIAMNTPVEVDIYAHANSTNVSGSRMLNGLGGSADFLRNAKLSIMHAPSARPSKTDPTGISTIVPMASHVDQTEHDLDVLVTDQGLADLRGLCPRERAREIIRQCAHPDYKPILTDYLDRAEHYAQRSRSMHEPHILQQALRFHTHLAEKGTMKVPSWD</sequence>
<keyword id="KW-0963">Cytoplasm</keyword>
<keyword id="KW-0378">Hydrolase</keyword>
<keyword id="KW-1185">Reference proteome</keyword>
<feature type="chain" id="PRO_0000215516" description="Acetyl-CoA hydrolase">
    <location>
        <begin position="1"/>
        <end position="523"/>
    </location>
</feature>
<feature type="active site" description="5-glutamyl coenzyme A thioester intermediate" evidence="2">
    <location>
        <position position="302"/>
    </location>
</feature>
<feature type="binding site" evidence="2">
    <location>
        <begin position="277"/>
        <end position="281"/>
    </location>
    <ligand>
        <name>CoA</name>
        <dbReference type="ChEBI" id="CHEBI:57287"/>
    </ligand>
</feature>
<feature type="binding site" evidence="2">
    <location>
        <position position="392"/>
    </location>
    <ligand>
        <name>CoA</name>
        <dbReference type="ChEBI" id="CHEBI:57287"/>
    </ligand>
</feature>
<feature type="binding site" evidence="2">
    <location>
        <position position="396"/>
    </location>
    <ligand>
        <name>CoA</name>
        <dbReference type="ChEBI" id="CHEBI:57287"/>
    </ligand>
</feature>
<comment type="function">
    <text evidence="1">Presumably involved in regulating the intracellular acetyl-CoA pool for fatty acid and cholesterol synthesis and fatty acid oxidation.</text>
</comment>
<comment type="catalytic activity">
    <reaction>
        <text>acetyl-CoA + H2O = acetate + CoA + H(+)</text>
        <dbReference type="Rhea" id="RHEA:20289"/>
        <dbReference type="ChEBI" id="CHEBI:15377"/>
        <dbReference type="ChEBI" id="CHEBI:15378"/>
        <dbReference type="ChEBI" id="CHEBI:30089"/>
        <dbReference type="ChEBI" id="CHEBI:57287"/>
        <dbReference type="ChEBI" id="CHEBI:57288"/>
        <dbReference type="EC" id="3.1.2.1"/>
    </reaction>
</comment>
<comment type="subcellular location">
    <subcellularLocation>
        <location evidence="1">Cytoplasm</location>
    </subcellularLocation>
</comment>
<comment type="similarity">
    <text evidence="3">Belongs to the acetyl-CoA hydrolase/transferase family.</text>
</comment>
<gene>
    <name type="primary">ACH1</name>
    <name type="ordered locus">AFR020W</name>
</gene>
<proteinExistence type="inferred from homology"/>
<name>ACH1_EREGS</name>